<sequence length="705" mass="76224">MLTPIIRKFQYGQHTVTIETGMMARQATAAVMVSMDDTAVFVTVVGQKKAKPGQSFFPLTVNYQERTYAAGRIPGSFFRREGRPSEGETLTSRLIDRPIRPLFPDSFLNEVQVIATVVSVNPQINPDIVALIGASAVLSLSGIPFNGPIGAARVGFINDQYVLNPTTDELKESRLDLVVAGTAGAVLMVESEADILSEEQMLGAVVFGHEQQQVVIENINALVAEAGKPKWDWQAEPVNEALHARVAELAEARLGDAYRITEKQERYTQVDAIKADVTEALLAQDDTLDAAEIQDILASVEKNVVRSRVLRGEPRIDGREKDMIRGLDVRTGILPRTHGSALFTRGETQALVTATLGTARDAQNIDELMGERTDSFLLHYNFPPYCVGETGMVGSPKRREIGHGRLAKRGVLAVMPSASEFPYTIRVVSEITESNGSSSMASVCGASLALMDAGVPIKAAVAGIAMGLVKEGDNFVVLSDILGDEDHLGDMDFKVAGSRDGVTALQMDIKIEGITREIMQVALNQAKGARLHILGVMEQAISTPRGDISEFAPRIYTMKINPEKIKDVIGKGGSVIRALTDETGTTIEIEDDGTIKIAATDGDKAKHAIRRIEEITAEIEVGRIYAGKVTRIVDFGAFVAIGGGKEGLVHISQIADKRVEKVTDYLQMGQDVPVKVMEVDRQGRIRLSIKEATTPDAEAPEAAAE</sequence>
<feature type="chain" id="PRO_0000329949" description="Polyribonucleotide nucleotidyltransferase">
    <location>
        <begin position="1"/>
        <end position="705"/>
    </location>
</feature>
<feature type="domain" description="KH" evidence="1">
    <location>
        <begin position="553"/>
        <end position="612"/>
    </location>
</feature>
<feature type="domain" description="S1 motif" evidence="1">
    <location>
        <begin position="622"/>
        <end position="690"/>
    </location>
</feature>
<feature type="binding site" evidence="1">
    <location>
        <position position="486"/>
    </location>
    <ligand>
        <name>Mg(2+)</name>
        <dbReference type="ChEBI" id="CHEBI:18420"/>
    </ligand>
</feature>
<feature type="binding site" evidence="1">
    <location>
        <position position="492"/>
    </location>
    <ligand>
        <name>Mg(2+)</name>
        <dbReference type="ChEBI" id="CHEBI:18420"/>
    </ligand>
</feature>
<gene>
    <name evidence="1" type="primary">pnp</name>
    <name type="ordered locus">YPN_0597</name>
    <name type="ORF">YP516_0628</name>
</gene>
<reference key="1">
    <citation type="journal article" date="2006" name="J. Bacteriol.">
        <title>Complete genome sequence of Yersinia pestis strains Antiqua and Nepal516: evidence of gene reduction in an emerging pathogen.</title>
        <authorList>
            <person name="Chain P.S.G."/>
            <person name="Hu P."/>
            <person name="Malfatti S.A."/>
            <person name="Radnedge L."/>
            <person name="Larimer F."/>
            <person name="Vergez L.M."/>
            <person name="Worsham P."/>
            <person name="Chu M.C."/>
            <person name="Andersen G.L."/>
        </authorList>
    </citation>
    <scope>NUCLEOTIDE SEQUENCE [LARGE SCALE GENOMIC DNA]</scope>
    <source>
        <strain>Nepal516</strain>
    </source>
</reference>
<reference key="2">
    <citation type="submission" date="2009-04" db="EMBL/GenBank/DDBJ databases">
        <title>Yersinia pestis Nepal516A whole genome shotgun sequencing project.</title>
        <authorList>
            <person name="Plunkett G. III"/>
            <person name="Anderson B.D."/>
            <person name="Baumler D.J."/>
            <person name="Burland V."/>
            <person name="Cabot E.L."/>
            <person name="Glasner J.D."/>
            <person name="Mau B."/>
            <person name="Neeno-Eckwall E."/>
            <person name="Perna N.T."/>
            <person name="Munk A.C."/>
            <person name="Tapia R."/>
            <person name="Green L.D."/>
            <person name="Rogers Y.C."/>
            <person name="Detter J.C."/>
            <person name="Bruce D.C."/>
            <person name="Brettin T.S."/>
        </authorList>
    </citation>
    <scope>NUCLEOTIDE SEQUENCE [LARGE SCALE GENOMIC DNA]</scope>
    <source>
        <strain>Nepal516</strain>
    </source>
</reference>
<proteinExistence type="inferred from homology"/>
<comment type="function">
    <text evidence="1">Involved in mRNA degradation. Catalyzes the phosphorolysis of single-stranded polyribonucleotides processively in the 3'- to 5'-direction.</text>
</comment>
<comment type="catalytic activity">
    <reaction evidence="1">
        <text>RNA(n+1) + phosphate = RNA(n) + a ribonucleoside 5'-diphosphate</text>
        <dbReference type="Rhea" id="RHEA:22096"/>
        <dbReference type="Rhea" id="RHEA-COMP:14527"/>
        <dbReference type="Rhea" id="RHEA-COMP:17342"/>
        <dbReference type="ChEBI" id="CHEBI:43474"/>
        <dbReference type="ChEBI" id="CHEBI:57930"/>
        <dbReference type="ChEBI" id="CHEBI:140395"/>
        <dbReference type="EC" id="2.7.7.8"/>
    </reaction>
</comment>
<comment type="cofactor">
    <cofactor evidence="1">
        <name>Mg(2+)</name>
        <dbReference type="ChEBI" id="CHEBI:18420"/>
    </cofactor>
</comment>
<comment type="subunit">
    <text evidence="1">Component of the RNA degradosome, which is a multiprotein complex involved in RNA processing and mRNA degradation.</text>
</comment>
<comment type="subcellular location">
    <subcellularLocation>
        <location evidence="1">Cytoplasm</location>
    </subcellularLocation>
</comment>
<comment type="similarity">
    <text evidence="1">Belongs to the polyribonucleotide nucleotidyltransferase family.</text>
</comment>
<comment type="sequence caution" evidence="2">
    <conflict type="erroneous initiation">
        <sequence resource="EMBL-CDS" id="ABG16929"/>
    </conflict>
</comment>
<protein>
    <recommendedName>
        <fullName evidence="1">Polyribonucleotide nucleotidyltransferase</fullName>
        <ecNumber evidence="1">2.7.7.8</ecNumber>
    </recommendedName>
    <alternativeName>
        <fullName evidence="1">Polynucleotide phosphorylase</fullName>
        <shortName evidence="1">PNPase</shortName>
    </alternativeName>
</protein>
<name>PNP_YERPN</name>
<keyword id="KW-0963">Cytoplasm</keyword>
<keyword id="KW-0460">Magnesium</keyword>
<keyword id="KW-0479">Metal-binding</keyword>
<keyword id="KW-0548">Nucleotidyltransferase</keyword>
<keyword id="KW-0694">RNA-binding</keyword>
<keyword id="KW-0808">Transferase</keyword>
<organism>
    <name type="scientific">Yersinia pestis bv. Antiqua (strain Nepal516)</name>
    <dbReference type="NCBI Taxonomy" id="377628"/>
    <lineage>
        <taxon>Bacteria</taxon>
        <taxon>Pseudomonadati</taxon>
        <taxon>Pseudomonadota</taxon>
        <taxon>Gammaproteobacteria</taxon>
        <taxon>Enterobacterales</taxon>
        <taxon>Yersiniaceae</taxon>
        <taxon>Yersinia</taxon>
    </lineage>
</organism>
<accession>Q1CM51</accession>
<accession>C4GPF9</accession>
<dbReference type="EC" id="2.7.7.8" evidence="1"/>
<dbReference type="EMBL" id="CP000305">
    <property type="protein sequence ID" value="ABG16929.1"/>
    <property type="status" value="ALT_INIT"/>
    <property type="molecule type" value="Genomic_DNA"/>
</dbReference>
<dbReference type="EMBL" id="ACNQ01000006">
    <property type="protein sequence ID" value="EEO78391.1"/>
    <property type="molecule type" value="Genomic_DNA"/>
</dbReference>
<dbReference type="RefSeq" id="WP_002228303.1">
    <property type="nucleotide sequence ID" value="NC_008149.1"/>
</dbReference>
<dbReference type="SMR" id="Q1CM51"/>
<dbReference type="KEGG" id="ypn:YPN_0597"/>
<dbReference type="HOGENOM" id="CLU_004217_2_2_6"/>
<dbReference type="Proteomes" id="UP000008936">
    <property type="component" value="Chromosome"/>
</dbReference>
<dbReference type="GO" id="GO:0005829">
    <property type="term" value="C:cytosol"/>
    <property type="evidence" value="ECO:0007669"/>
    <property type="project" value="TreeGrafter"/>
</dbReference>
<dbReference type="GO" id="GO:0000175">
    <property type="term" value="F:3'-5'-RNA exonuclease activity"/>
    <property type="evidence" value="ECO:0007669"/>
    <property type="project" value="TreeGrafter"/>
</dbReference>
<dbReference type="GO" id="GO:0000287">
    <property type="term" value="F:magnesium ion binding"/>
    <property type="evidence" value="ECO:0007669"/>
    <property type="project" value="UniProtKB-UniRule"/>
</dbReference>
<dbReference type="GO" id="GO:0004654">
    <property type="term" value="F:polyribonucleotide nucleotidyltransferase activity"/>
    <property type="evidence" value="ECO:0007669"/>
    <property type="project" value="UniProtKB-UniRule"/>
</dbReference>
<dbReference type="GO" id="GO:0003723">
    <property type="term" value="F:RNA binding"/>
    <property type="evidence" value="ECO:0007669"/>
    <property type="project" value="UniProtKB-UniRule"/>
</dbReference>
<dbReference type="GO" id="GO:0006402">
    <property type="term" value="P:mRNA catabolic process"/>
    <property type="evidence" value="ECO:0007669"/>
    <property type="project" value="UniProtKB-UniRule"/>
</dbReference>
<dbReference type="GO" id="GO:0006396">
    <property type="term" value="P:RNA processing"/>
    <property type="evidence" value="ECO:0007669"/>
    <property type="project" value="InterPro"/>
</dbReference>
<dbReference type="CDD" id="cd02393">
    <property type="entry name" value="KH-I_PNPase"/>
    <property type="match status" value="1"/>
</dbReference>
<dbReference type="CDD" id="cd11363">
    <property type="entry name" value="RNase_PH_PNPase_1"/>
    <property type="match status" value="1"/>
</dbReference>
<dbReference type="CDD" id="cd11364">
    <property type="entry name" value="RNase_PH_PNPase_2"/>
    <property type="match status" value="1"/>
</dbReference>
<dbReference type="CDD" id="cd04472">
    <property type="entry name" value="S1_PNPase"/>
    <property type="match status" value="1"/>
</dbReference>
<dbReference type="FunFam" id="2.40.50.140:FF:000023">
    <property type="entry name" value="Polyribonucleotide nucleotidyltransferase"/>
    <property type="match status" value="1"/>
</dbReference>
<dbReference type="FunFam" id="3.30.1370.10:FF:000001">
    <property type="entry name" value="Polyribonucleotide nucleotidyltransferase"/>
    <property type="match status" value="1"/>
</dbReference>
<dbReference type="FunFam" id="3.30.230.70:FF:000001">
    <property type="entry name" value="Polyribonucleotide nucleotidyltransferase"/>
    <property type="match status" value="1"/>
</dbReference>
<dbReference type="FunFam" id="3.30.230.70:FF:000002">
    <property type="entry name" value="Polyribonucleotide nucleotidyltransferase"/>
    <property type="match status" value="1"/>
</dbReference>
<dbReference type="Gene3D" id="3.30.230.70">
    <property type="entry name" value="GHMP Kinase, N-terminal domain"/>
    <property type="match status" value="2"/>
</dbReference>
<dbReference type="Gene3D" id="3.30.1370.10">
    <property type="entry name" value="K Homology domain, type 1"/>
    <property type="match status" value="1"/>
</dbReference>
<dbReference type="Gene3D" id="2.40.50.140">
    <property type="entry name" value="Nucleic acid-binding proteins"/>
    <property type="match status" value="1"/>
</dbReference>
<dbReference type="HAMAP" id="MF_01595">
    <property type="entry name" value="PNPase"/>
    <property type="match status" value="1"/>
</dbReference>
<dbReference type="InterPro" id="IPR001247">
    <property type="entry name" value="ExoRNase_PH_dom1"/>
</dbReference>
<dbReference type="InterPro" id="IPR015847">
    <property type="entry name" value="ExoRNase_PH_dom2"/>
</dbReference>
<dbReference type="InterPro" id="IPR036345">
    <property type="entry name" value="ExoRNase_PH_dom2_sf"/>
</dbReference>
<dbReference type="InterPro" id="IPR004087">
    <property type="entry name" value="KH_dom"/>
</dbReference>
<dbReference type="InterPro" id="IPR004088">
    <property type="entry name" value="KH_dom_type_1"/>
</dbReference>
<dbReference type="InterPro" id="IPR036612">
    <property type="entry name" value="KH_dom_type_1_sf"/>
</dbReference>
<dbReference type="InterPro" id="IPR012340">
    <property type="entry name" value="NA-bd_OB-fold"/>
</dbReference>
<dbReference type="InterPro" id="IPR012162">
    <property type="entry name" value="PNPase"/>
</dbReference>
<dbReference type="InterPro" id="IPR027408">
    <property type="entry name" value="PNPase/RNase_PH_dom_sf"/>
</dbReference>
<dbReference type="InterPro" id="IPR015848">
    <property type="entry name" value="PNPase_PH_RNA-bd_bac/org-type"/>
</dbReference>
<dbReference type="InterPro" id="IPR036456">
    <property type="entry name" value="PNPase_PH_RNA-bd_sf"/>
</dbReference>
<dbReference type="InterPro" id="IPR020568">
    <property type="entry name" value="Ribosomal_Su5_D2-typ_SF"/>
</dbReference>
<dbReference type="InterPro" id="IPR003029">
    <property type="entry name" value="S1_domain"/>
</dbReference>
<dbReference type="NCBIfam" id="TIGR03591">
    <property type="entry name" value="polynuc_phos"/>
    <property type="match status" value="1"/>
</dbReference>
<dbReference type="NCBIfam" id="NF008805">
    <property type="entry name" value="PRK11824.1"/>
    <property type="match status" value="1"/>
</dbReference>
<dbReference type="PANTHER" id="PTHR11252">
    <property type="entry name" value="POLYRIBONUCLEOTIDE NUCLEOTIDYLTRANSFERASE"/>
    <property type="match status" value="1"/>
</dbReference>
<dbReference type="PANTHER" id="PTHR11252:SF0">
    <property type="entry name" value="POLYRIBONUCLEOTIDE NUCLEOTIDYLTRANSFERASE 1, MITOCHONDRIAL"/>
    <property type="match status" value="1"/>
</dbReference>
<dbReference type="Pfam" id="PF00013">
    <property type="entry name" value="KH_1"/>
    <property type="match status" value="1"/>
</dbReference>
<dbReference type="Pfam" id="PF03726">
    <property type="entry name" value="PNPase"/>
    <property type="match status" value="1"/>
</dbReference>
<dbReference type="Pfam" id="PF01138">
    <property type="entry name" value="RNase_PH"/>
    <property type="match status" value="2"/>
</dbReference>
<dbReference type="Pfam" id="PF03725">
    <property type="entry name" value="RNase_PH_C"/>
    <property type="match status" value="2"/>
</dbReference>
<dbReference type="Pfam" id="PF00575">
    <property type="entry name" value="S1"/>
    <property type="match status" value="1"/>
</dbReference>
<dbReference type="PIRSF" id="PIRSF005499">
    <property type="entry name" value="PNPase"/>
    <property type="match status" value="1"/>
</dbReference>
<dbReference type="SMART" id="SM00322">
    <property type="entry name" value="KH"/>
    <property type="match status" value="1"/>
</dbReference>
<dbReference type="SMART" id="SM00316">
    <property type="entry name" value="S1"/>
    <property type="match status" value="1"/>
</dbReference>
<dbReference type="SUPFAM" id="SSF54791">
    <property type="entry name" value="Eukaryotic type KH-domain (KH-domain type I)"/>
    <property type="match status" value="1"/>
</dbReference>
<dbReference type="SUPFAM" id="SSF50249">
    <property type="entry name" value="Nucleic acid-binding proteins"/>
    <property type="match status" value="1"/>
</dbReference>
<dbReference type="SUPFAM" id="SSF46915">
    <property type="entry name" value="Polynucleotide phosphorylase/guanosine pentaphosphate synthase (PNPase/GPSI), domain 3"/>
    <property type="match status" value="1"/>
</dbReference>
<dbReference type="SUPFAM" id="SSF55666">
    <property type="entry name" value="Ribonuclease PH domain 2-like"/>
    <property type="match status" value="2"/>
</dbReference>
<dbReference type="SUPFAM" id="SSF54211">
    <property type="entry name" value="Ribosomal protein S5 domain 2-like"/>
    <property type="match status" value="2"/>
</dbReference>
<dbReference type="PROSITE" id="PS50084">
    <property type="entry name" value="KH_TYPE_1"/>
    <property type="match status" value="1"/>
</dbReference>
<dbReference type="PROSITE" id="PS50126">
    <property type="entry name" value="S1"/>
    <property type="match status" value="1"/>
</dbReference>
<evidence type="ECO:0000255" key="1">
    <source>
        <dbReference type="HAMAP-Rule" id="MF_01595"/>
    </source>
</evidence>
<evidence type="ECO:0000305" key="2"/>